<evidence type="ECO:0000250" key="1">
    <source>
        <dbReference type="UniProtKB" id="P21730"/>
    </source>
</evidence>
<evidence type="ECO:0000255" key="2">
    <source>
        <dbReference type="PROSITE-ProRule" id="PRU00521"/>
    </source>
</evidence>
<evidence type="ECO:0000305" key="3"/>
<feature type="chain" id="PRO_0000069212" description="C5a anaphylatoxin chemotactic receptor 1" evidence="3">
    <location>
        <begin position="1"/>
        <end position="350"/>
    </location>
</feature>
<feature type="topological domain" description="Extracellular" evidence="3">
    <location>
        <begin position="1"/>
        <end position="37"/>
    </location>
</feature>
<feature type="transmembrane region" description="Helical; Name=1" evidence="1">
    <location>
        <begin position="38"/>
        <end position="64"/>
    </location>
</feature>
<feature type="topological domain" description="Cytoplasmic" evidence="3">
    <location>
        <begin position="65"/>
        <end position="69"/>
    </location>
</feature>
<feature type="transmembrane region" description="Helical; Name=2" evidence="1">
    <location>
        <begin position="70"/>
        <end position="93"/>
    </location>
</feature>
<feature type="topological domain" description="Extracellular" evidence="3">
    <location>
        <begin position="94"/>
        <end position="110"/>
    </location>
</feature>
<feature type="transmembrane region" description="Helical; Name=3" evidence="1">
    <location>
        <begin position="111"/>
        <end position="132"/>
    </location>
</feature>
<feature type="topological domain" description="Cytoplasmic" evidence="3">
    <location>
        <begin position="133"/>
        <end position="153"/>
    </location>
</feature>
<feature type="transmembrane region" description="Helical; Name=4" evidence="1">
    <location>
        <begin position="154"/>
        <end position="174"/>
    </location>
</feature>
<feature type="topological domain" description="Extracellular" evidence="3">
    <location>
        <begin position="175"/>
        <end position="200"/>
    </location>
</feature>
<feature type="transmembrane region" description="Helical; Name=5" evidence="1">
    <location>
        <begin position="201"/>
        <end position="226"/>
    </location>
</feature>
<feature type="topological domain" description="Cytoplasmic" evidence="3">
    <location>
        <begin position="227"/>
        <end position="242"/>
    </location>
</feature>
<feature type="transmembrane region" description="Helical; Name=6" evidence="1">
    <location>
        <begin position="243"/>
        <end position="265"/>
    </location>
</feature>
<feature type="topological domain" description="Extracellular" evidence="3">
    <location>
        <begin position="266"/>
        <end position="282"/>
    </location>
</feature>
<feature type="transmembrane region" description="Helical; Name=7" evidence="1">
    <location>
        <begin position="283"/>
        <end position="303"/>
    </location>
</feature>
<feature type="topological domain" description="Cytoplasmic" evidence="3">
    <location>
        <begin position="304"/>
        <end position="350"/>
    </location>
</feature>
<feature type="region of interest" description="Required for CHIPS binding" evidence="1">
    <location>
        <begin position="10"/>
        <end position="18"/>
    </location>
</feature>
<feature type="region of interest" description="Involved in C5a binding" evidence="1">
    <location>
        <begin position="21"/>
        <end position="30"/>
    </location>
</feature>
<feature type="modified residue" description="Sulfotyrosine" evidence="1">
    <location>
        <position position="11"/>
    </location>
</feature>
<feature type="modified residue" description="Sulfotyrosine" evidence="1">
    <location>
        <position position="14"/>
    </location>
</feature>
<feature type="modified residue" description="Phosphoserine" evidence="1">
    <location>
        <position position="314"/>
    </location>
</feature>
<feature type="modified residue" description="Phosphoserine" evidence="1">
    <location>
        <position position="317"/>
    </location>
</feature>
<feature type="modified residue" description="Phosphoserine" evidence="1">
    <location>
        <position position="327"/>
    </location>
</feature>
<feature type="modified residue" description="Phosphoserine" evidence="1">
    <location>
        <position position="332"/>
    </location>
</feature>
<feature type="modified residue" description="Phosphoserine" evidence="1">
    <location>
        <position position="334"/>
    </location>
</feature>
<feature type="modified residue" description="Phosphoserine" evidence="1">
    <location>
        <position position="338"/>
    </location>
</feature>
<feature type="disulfide bond" evidence="2">
    <location>
        <begin position="109"/>
        <end position="188"/>
    </location>
</feature>
<feature type="sequence conflict" description="In Ref. 2; CAA66314." evidence="3" ref="2">
    <original>K</original>
    <variation>N</variation>
    <location>
        <position position="279"/>
    </location>
</feature>
<feature type="sequence conflict" description="In Ref. 2; CAA66314." evidence="3" ref="2">
    <original>A</original>
    <variation>T</variation>
    <location>
        <position position="336"/>
    </location>
</feature>
<feature type="sequence conflict" description="In Ref. 2; CAA66314." evidence="3" ref="2">
    <original>D</original>
    <variation>Q</variation>
    <location>
        <position position="345"/>
    </location>
</feature>
<sequence length="350" mass="39339">MDSFDYTTPDYGHYDDKDTLDLNTPVDKTSNTLRVPDILALVIFAVVFLVGVLGNALVVWVTAFEAKRTINAIWFLNLAVADFLSCLALPILFTSIVQHHHWPFGGAACSILPSLILLNMYASILLLATISADRFLLVFKPIWCQNFRGAGLAWIACAVAWGLALLLTIPSFLYRVVREEYFPPKVLCGVDYSHDKRRERAVAIVRLVLGFLWPLLTLMICYTFILLRTWSRRATRSTKTLKVVVAVVASFFIFWLPYQVTGIMMSFLEPSSPTFRLLKKLDSLCVSFAYINCCINPIIYVVAGQGFQGRLQKSLPSLLRNVLTEESVVRESKSFARSTVDTMADKTQAV</sequence>
<name>C5AR1_PANTR</name>
<organism>
    <name type="scientific">Pan troglodytes</name>
    <name type="common">Chimpanzee</name>
    <dbReference type="NCBI Taxonomy" id="9598"/>
    <lineage>
        <taxon>Eukaryota</taxon>
        <taxon>Metazoa</taxon>
        <taxon>Chordata</taxon>
        <taxon>Craniata</taxon>
        <taxon>Vertebrata</taxon>
        <taxon>Euteleostomi</taxon>
        <taxon>Mammalia</taxon>
        <taxon>Eutheria</taxon>
        <taxon>Euarchontoglires</taxon>
        <taxon>Primates</taxon>
        <taxon>Haplorrhini</taxon>
        <taxon>Catarrhini</taxon>
        <taxon>Hominidae</taxon>
        <taxon>Pan</taxon>
    </lineage>
</organism>
<dbReference type="EMBL" id="AACZ03116665">
    <property type="status" value="NOT_ANNOTATED_CDS"/>
    <property type="molecule type" value="Genomic_DNA"/>
</dbReference>
<dbReference type="EMBL" id="X97730">
    <property type="protein sequence ID" value="CAA66314.1"/>
    <property type="molecule type" value="Genomic_DNA"/>
</dbReference>
<dbReference type="RefSeq" id="XP_524316.3">
    <property type="nucleotide sequence ID" value="XM_524316.8"/>
</dbReference>
<dbReference type="SMR" id="P79240"/>
<dbReference type="FunCoup" id="P79240">
    <property type="interactions" value="748"/>
</dbReference>
<dbReference type="STRING" id="9598.ENSPTRP00000054387"/>
<dbReference type="PaxDb" id="9598-ENSPTRP00000054387"/>
<dbReference type="Ensembl" id="ENSPTRT00000077250.1">
    <property type="protein sequence ID" value="ENSPTRP00000083354.1"/>
    <property type="gene ID" value="ENSPTRG00000028958.5"/>
</dbReference>
<dbReference type="GeneID" id="468931"/>
<dbReference type="KEGG" id="ptr:468931"/>
<dbReference type="CTD" id="728"/>
<dbReference type="VGNC" id="VGNC:2364">
    <property type="gene designation" value="C5AR1"/>
</dbReference>
<dbReference type="eggNOG" id="ENOG502R35Z">
    <property type="taxonomic scope" value="Eukaryota"/>
</dbReference>
<dbReference type="GeneTree" id="ENSGT01130000278339"/>
<dbReference type="HOGENOM" id="CLU_009579_8_0_1"/>
<dbReference type="InParanoid" id="P79240"/>
<dbReference type="OMA" id="VAVWCLA"/>
<dbReference type="TreeFam" id="TF330976"/>
<dbReference type="Proteomes" id="UP000002277">
    <property type="component" value="Chromosome 19"/>
</dbReference>
<dbReference type="Bgee" id="ENSPTRG00000028958">
    <property type="expression patterns" value="Expressed in bone marrow and 16 other cell types or tissues"/>
</dbReference>
<dbReference type="GO" id="GO:0045177">
    <property type="term" value="C:apical part of cell"/>
    <property type="evidence" value="ECO:0000250"/>
    <property type="project" value="UniProtKB"/>
</dbReference>
<dbReference type="GO" id="GO:0016323">
    <property type="term" value="C:basolateral plasma membrane"/>
    <property type="evidence" value="ECO:0000250"/>
    <property type="project" value="UniProtKB"/>
</dbReference>
<dbReference type="GO" id="GO:0031410">
    <property type="term" value="C:cytoplasmic vesicle"/>
    <property type="evidence" value="ECO:0007669"/>
    <property type="project" value="UniProtKB-KW"/>
</dbReference>
<dbReference type="GO" id="GO:0005886">
    <property type="term" value="C:plasma membrane"/>
    <property type="evidence" value="ECO:0000318"/>
    <property type="project" value="GO_Central"/>
</dbReference>
<dbReference type="GO" id="GO:0004878">
    <property type="term" value="F:complement component C5a receptor activity"/>
    <property type="evidence" value="ECO:0000250"/>
    <property type="project" value="UniProtKB"/>
</dbReference>
<dbReference type="GO" id="GO:0004930">
    <property type="term" value="F:G protein-coupled receptor activity"/>
    <property type="evidence" value="ECO:0000318"/>
    <property type="project" value="GO_Central"/>
</dbReference>
<dbReference type="GO" id="GO:0006935">
    <property type="term" value="P:chemotaxis"/>
    <property type="evidence" value="ECO:0007669"/>
    <property type="project" value="UniProtKB-KW"/>
</dbReference>
<dbReference type="GO" id="GO:0002430">
    <property type="term" value="P:complement receptor mediated signaling pathway"/>
    <property type="evidence" value="ECO:0000318"/>
    <property type="project" value="GO_Central"/>
</dbReference>
<dbReference type="GO" id="GO:0006954">
    <property type="term" value="P:inflammatory response"/>
    <property type="evidence" value="ECO:0000318"/>
    <property type="project" value="GO_Central"/>
</dbReference>
<dbReference type="GO" id="GO:0042789">
    <property type="term" value="P:mRNA transcription by RNA polymerase II"/>
    <property type="evidence" value="ECO:0000250"/>
    <property type="project" value="UniProtKB"/>
</dbReference>
<dbReference type="GO" id="GO:0007200">
    <property type="term" value="P:phospholipase C-activating G protein-coupled receptor signaling pathway"/>
    <property type="evidence" value="ECO:0000318"/>
    <property type="project" value="GO_Central"/>
</dbReference>
<dbReference type="GO" id="GO:0007204">
    <property type="term" value="P:positive regulation of cytosolic calcium ion concentration"/>
    <property type="evidence" value="ECO:0000318"/>
    <property type="project" value="GO_Central"/>
</dbReference>
<dbReference type="GO" id="GO:0050679">
    <property type="term" value="P:positive regulation of epithelial cell proliferation"/>
    <property type="evidence" value="ECO:0000250"/>
    <property type="project" value="UniProtKB"/>
</dbReference>
<dbReference type="GO" id="GO:0070374">
    <property type="term" value="P:positive regulation of ERK1 and ERK2 cascade"/>
    <property type="evidence" value="ECO:0000250"/>
    <property type="project" value="UniProtKB"/>
</dbReference>
<dbReference type="CDD" id="cd15114">
    <property type="entry name" value="7tmA_C5aR"/>
    <property type="match status" value="1"/>
</dbReference>
<dbReference type="FunFam" id="1.20.1070.10:FF:000034">
    <property type="entry name" value="G-protein coupled receptor 1"/>
    <property type="match status" value="1"/>
</dbReference>
<dbReference type="Gene3D" id="1.20.1070.10">
    <property type="entry name" value="Rhodopsin 7-helix transmembrane proteins"/>
    <property type="match status" value="1"/>
</dbReference>
<dbReference type="InterPro" id="IPR002234">
    <property type="entry name" value="Anphylx_rcpt_C3a/C5a1-2"/>
</dbReference>
<dbReference type="InterPro" id="IPR000826">
    <property type="entry name" value="Formyl_rcpt-rel"/>
</dbReference>
<dbReference type="InterPro" id="IPR000276">
    <property type="entry name" value="GPCR_Rhodpsn"/>
</dbReference>
<dbReference type="InterPro" id="IPR017452">
    <property type="entry name" value="GPCR_Rhodpsn_7TM"/>
</dbReference>
<dbReference type="PANTHER" id="PTHR24225:SF29">
    <property type="entry name" value="C5A ANAPHYLATOXIN CHEMOTACTIC RECEPTOR 1"/>
    <property type="match status" value="1"/>
</dbReference>
<dbReference type="PANTHER" id="PTHR24225">
    <property type="entry name" value="CHEMOTACTIC RECEPTOR"/>
    <property type="match status" value="1"/>
</dbReference>
<dbReference type="Pfam" id="PF00001">
    <property type="entry name" value="7tm_1"/>
    <property type="match status" value="1"/>
</dbReference>
<dbReference type="PRINTS" id="PR01104">
    <property type="entry name" value="ANPHYLATOXNR"/>
</dbReference>
<dbReference type="PRINTS" id="PR00426">
    <property type="entry name" value="C5ANPHYLTXNR"/>
</dbReference>
<dbReference type="PRINTS" id="PR00237">
    <property type="entry name" value="GPCRRHODOPSN"/>
</dbReference>
<dbReference type="SUPFAM" id="SSF81321">
    <property type="entry name" value="Family A G protein-coupled receptor-like"/>
    <property type="match status" value="1"/>
</dbReference>
<dbReference type="PROSITE" id="PS00237">
    <property type="entry name" value="G_PROTEIN_RECEP_F1_1"/>
    <property type="match status" value="1"/>
</dbReference>
<dbReference type="PROSITE" id="PS50262">
    <property type="entry name" value="G_PROTEIN_RECEP_F1_2"/>
    <property type="match status" value="1"/>
</dbReference>
<proteinExistence type="inferred from homology"/>
<gene>
    <name type="primary">C5AR1</name>
    <name type="synonym">C5AR</name>
    <name type="synonym">C5R1</name>
</gene>
<reference key="1">
    <citation type="journal article" date="2005" name="Nature">
        <title>Initial sequence of the chimpanzee genome and comparison with the human genome.</title>
        <authorList>
            <consortium name="Chimpanzee sequencing and analysis consortium"/>
        </authorList>
    </citation>
    <scope>NUCLEOTIDE SEQUENCE [LARGE SCALE GENOMIC DNA]</scope>
</reference>
<reference key="2">
    <citation type="journal article" date="1996" name="Immunogenetics">
        <title>Molecular evolution of the N-formyl peptide and C5a receptors in non-human primates.</title>
        <authorList>
            <person name="Alvarez V."/>
            <person name="Coto E."/>
            <person name="Sehen F."/>
            <person name="Gouzalek-Koces S."/>
            <person name="Lopez-Larrea C."/>
        </authorList>
    </citation>
    <scope>NUCLEOTIDE SEQUENCE [GENOMIC DNA] OF 8-347</scope>
</reference>
<keyword id="KW-1003">Cell membrane</keyword>
<keyword id="KW-0145">Chemotaxis</keyword>
<keyword id="KW-0968">Cytoplasmic vesicle</keyword>
<keyword id="KW-1015">Disulfide bond</keyword>
<keyword id="KW-0297">G-protein coupled receptor</keyword>
<keyword id="KW-0472">Membrane</keyword>
<keyword id="KW-0597">Phosphoprotein</keyword>
<keyword id="KW-0675">Receptor</keyword>
<keyword id="KW-1185">Reference proteome</keyword>
<keyword id="KW-0765">Sulfation</keyword>
<keyword id="KW-0807">Transducer</keyword>
<keyword id="KW-0812">Transmembrane</keyword>
<keyword id="KW-1133">Transmembrane helix</keyword>
<protein>
    <recommendedName>
        <fullName>C5a anaphylatoxin chemotactic receptor 1</fullName>
    </recommendedName>
    <alternativeName>
        <fullName>C5a anaphylatoxin chemotactic receptor</fullName>
        <shortName>C5a-R</shortName>
        <shortName>C5aR</shortName>
    </alternativeName>
    <cdAntigenName>CD88</cdAntigenName>
</protein>
<accession>P79240</accession>
<accession>H2RAR4</accession>
<comment type="function">
    <text evidence="1">Receptor for the chemotactic and inflammatory peptide anaphylatoxin C5a. The ligand interacts with at least two sites on the receptor: a high-affinity site on the extracellular N-terminus, and a second site in the transmembrane region which activates downstream signaling events. Receptor activation stimulates chemotaxis, granule enzyme release, intracellular calcium release and superoxide anion production.</text>
</comment>
<comment type="subunit">
    <text evidence="1">Homodimer. May also form higher-order oligomers. Interacts (when phosphorylated) with ARRB1 and ARRB2; the interaction is associated with internalization of C5aR. Interacts (via N-terminal domain) with S.aureus chemotaxis inhibitory protein (CHIPS); the interaction blocks the receptor and may thus inhibit the immune response.</text>
</comment>
<comment type="subcellular location">
    <subcellularLocation>
        <location evidence="1">Cell membrane</location>
        <topology evidence="1">Multi-pass membrane protein</topology>
    </subcellularLocation>
    <subcellularLocation>
        <location evidence="1">Cytoplasmic vesicle</location>
    </subcellularLocation>
    <text evidence="1">Phosphorylated C5aR colocalizes with ARRB1 and ARRB2 in cytoplasmic vesicles.</text>
</comment>
<comment type="PTM">
    <text evidence="1">Sulfation plays a critical role in the association of C5aR with C5a, but no significant role in the ability of the receptor to transduce a signal and mobilize calcium in response to a small peptide agonist. Sulfation at Tyr-14 is important for CHIPS binding.</text>
</comment>
<comment type="PTM">
    <text evidence="1">Phosphorylated on serine residues in response to C5a binding, resulting in internalization of the receptor and short-term desensitization to C5a.</text>
</comment>
<comment type="similarity">
    <text evidence="2">Belongs to the G-protein coupled receptor 1 family.</text>
</comment>